<reference key="1">
    <citation type="submission" date="2008-07" db="EMBL/GenBank/DDBJ databases">
        <title>Complete sequence of Geobacter bemidjiensis BEM.</title>
        <authorList>
            <consortium name="US DOE Joint Genome Institute"/>
            <person name="Lucas S."/>
            <person name="Copeland A."/>
            <person name="Lapidus A."/>
            <person name="Glavina del Rio T."/>
            <person name="Dalin E."/>
            <person name="Tice H."/>
            <person name="Bruce D."/>
            <person name="Goodwin L."/>
            <person name="Pitluck S."/>
            <person name="Kiss H."/>
            <person name="Brettin T."/>
            <person name="Detter J.C."/>
            <person name="Han C."/>
            <person name="Kuske C.R."/>
            <person name="Schmutz J."/>
            <person name="Larimer F."/>
            <person name="Land M."/>
            <person name="Hauser L."/>
            <person name="Kyrpides N."/>
            <person name="Lykidis A."/>
            <person name="Lovley D."/>
            <person name="Richardson P."/>
        </authorList>
    </citation>
    <scope>NUCLEOTIDE SEQUENCE [LARGE SCALE GENOMIC DNA]</scope>
    <source>
        <strain>ATCC BAA-1014 / DSM 16622 / JCM 12645 / Bem</strain>
    </source>
</reference>
<dbReference type="EMBL" id="CP001124">
    <property type="protein sequence ID" value="ACH37954.1"/>
    <property type="molecule type" value="Genomic_DNA"/>
</dbReference>
<dbReference type="RefSeq" id="WP_012529366.1">
    <property type="nucleotide sequence ID" value="NC_011146.1"/>
</dbReference>
<dbReference type="SMR" id="B5EFQ0"/>
<dbReference type="STRING" id="404380.Gbem_0933"/>
<dbReference type="KEGG" id="gbm:Gbem_0933"/>
<dbReference type="eggNOG" id="COG0087">
    <property type="taxonomic scope" value="Bacteria"/>
</dbReference>
<dbReference type="HOGENOM" id="CLU_044142_4_1_7"/>
<dbReference type="OrthoDB" id="9806135at2"/>
<dbReference type="Proteomes" id="UP000008825">
    <property type="component" value="Chromosome"/>
</dbReference>
<dbReference type="GO" id="GO:0022625">
    <property type="term" value="C:cytosolic large ribosomal subunit"/>
    <property type="evidence" value="ECO:0007669"/>
    <property type="project" value="TreeGrafter"/>
</dbReference>
<dbReference type="GO" id="GO:0019843">
    <property type="term" value="F:rRNA binding"/>
    <property type="evidence" value="ECO:0007669"/>
    <property type="project" value="UniProtKB-UniRule"/>
</dbReference>
<dbReference type="GO" id="GO:0003735">
    <property type="term" value="F:structural constituent of ribosome"/>
    <property type="evidence" value="ECO:0007669"/>
    <property type="project" value="InterPro"/>
</dbReference>
<dbReference type="GO" id="GO:0006412">
    <property type="term" value="P:translation"/>
    <property type="evidence" value="ECO:0007669"/>
    <property type="project" value="UniProtKB-UniRule"/>
</dbReference>
<dbReference type="FunFam" id="2.40.30.10:FF:000004">
    <property type="entry name" value="50S ribosomal protein L3"/>
    <property type="match status" value="1"/>
</dbReference>
<dbReference type="Gene3D" id="3.30.160.810">
    <property type="match status" value="1"/>
</dbReference>
<dbReference type="Gene3D" id="2.40.30.10">
    <property type="entry name" value="Translation factors"/>
    <property type="match status" value="1"/>
</dbReference>
<dbReference type="HAMAP" id="MF_01325_B">
    <property type="entry name" value="Ribosomal_uL3_B"/>
    <property type="match status" value="1"/>
</dbReference>
<dbReference type="InterPro" id="IPR000597">
    <property type="entry name" value="Ribosomal_uL3"/>
</dbReference>
<dbReference type="InterPro" id="IPR019927">
    <property type="entry name" value="Ribosomal_uL3_bac/org-type"/>
</dbReference>
<dbReference type="InterPro" id="IPR019926">
    <property type="entry name" value="Ribosomal_uL3_CS"/>
</dbReference>
<dbReference type="InterPro" id="IPR009000">
    <property type="entry name" value="Transl_B-barrel_sf"/>
</dbReference>
<dbReference type="NCBIfam" id="TIGR03625">
    <property type="entry name" value="L3_bact"/>
    <property type="match status" value="1"/>
</dbReference>
<dbReference type="PANTHER" id="PTHR11229">
    <property type="entry name" value="50S RIBOSOMAL PROTEIN L3"/>
    <property type="match status" value="1"/>
</dbReference>
<dbReference type="PANTHER" id="PTHR11229:SF16">
    <property type="entry name" value="LARGE RIBOSOMAL SUBUNIT PROTEIN UL3C"/>
    <property type="match status" value="1"/>
</dbReference>
<dbReference type="Pfam" id="PF00297">
    <property type="entry name" value="Ribosomal_L3"/>
    <property type="match status" value="1"/>
</dbReference>
<dbReference type="SUPFAM" id="SSF50447">
    <property type="entry name" value="Translation proteins"/>
    <property type="match status" value="1"/>
</dbReference>
<dbReference type="PROSITE" id="PS00474">
    <property type="entry name" value="RIBOSOMAL_L3"/>
    <property type="match status" value="1"/>
</dbReference>
<feature type="chain" id="PRO_1000141873" description="Large ribosomal subunit protein uL3">
    <location>
        <begin position="1"/>
        <end position="211"/>
    </location>
</feature>
<protein>
    <recommendedName>
        <fullName evidence="1">Large ribosomal subunit protein uL3</fullName>
    </recommendedName>
    <alternativeName>
        <fullName evidence="2">50S ribosomal protein L3</fullName>
    </alternativeName>
</protein>
<proteinExistence type="inferred from homology"/>
<keyword id="KW-1185">Reference proteome</keyword>
<keyword id="KW-0687">Ribonucleoprotein</keyword>
<keyword id="KW-0689">Ribosomal protein</keyword>
<keyword id="KW-0694">RNA-binding</keyword>
<keyword id="KW-0699">rRNA-binding</keyword>
<evidence type="ECO:0000255" key="1">
    <source>
        <dbReference type="HAMAP-Rule" id="MF_01325"/>
    </source>
</evidence>
<evidence type="ECO:0000305" key="2"/>
<sequence length="211" mass="22112">MNKGLIGKKLGMTQIFAEDGRRIAVTVVEAGPCVVVQKKSVAKDGYSAIQVGFGAKDASRANAAQVGHCKGAGAGVFTHYRELRMDNTDAYKLGDVIEAAVFEEGDLVDVTGTSIGKGFAGVIKRWGFKGGRSSHGSRFHRAPGSIGCSATPSRVFKNKKMPGQLGNEKVTVQRLKVVRVDAADNLILLGGAIPGSANGVVLIKDSVKAKK</sequence>
<comment type="function">
    <text evidence="1">One of the primary rRNA binding proteins, it binds directly near the 3'-end of the 23S rRNA, where it nucleates assembly of the 50S subunit.</text>
</comment>
<comment type="subunit">
    <text evidence="1">Part of the 50S ribosomal subunit. Forms a cluster with proteins L14 and L19.</text>
</comment>
<comment type="similarity">
    <text evidence="1">Belongs to the universal ribosomal protein uL3 family.</text>
</comment>
<accession>B5EFQ0</accession>
<gene>
    <name evidence="1" type="primary">rplC</name>
    <name type="ordered locus">Gbem_0933</name>
</gene>
<name>RL3_CITBB</name>
<organism>
    <name type="scientific">Citrifermentans bemidjiense (strain ATCC BAA-1014 / DSM 16622 / JCM 12645 / Bem)</name>
    <name type="common">Geobacter bemidjiensis</name>
    <dbReference type="NCBI Taxonomy" id="404380"/>
    <lineage>
        <taxon>Bacteria</taxon>
        <taxon>Pseudomonadati</taxon>
        <taxon>Thermodesulfobacteriota</taxon>
        <taxon>Desulfuromonadia</taxon>
        <taxon>Geobacterales</taxon>
        <taxon>Geobacteraceae</taxon>
        <taxon>Citrifermentans</taxon>
    </lineage>
</organism>